<feature type="chain" id="PRO_0000077871" description="Putative nuclease p44">
    <location>
        <begin position="1"/>
        <end position="93"/>
    </location>
</feature>
<feature type="domain" description="VRR-NUC">
    <location>
        <begin position="5"/>
        <end position="84"/>
    </location>
</feature>
<protein>
    <recommendedName>
        <fullName>Putative nuclease p44</fullName>
        <ecNumber>3.1.-.-</ecNumber>
    </recommendedName>
</protein>
<name>VP44_BPAPS</name>
<gene>
    <name type="primary">44</name>
</gene>
<accession>Q9T1Q4</accession>
<proteinExistence type="inferred from homology"/>
<keyword id="KW-0378">Hydrolase</keyword>
<keyword id="KW-0460">Magnesium</keyword>
<keyword id="KW-0479">Metal-binding</keyword>
<keyword id="KW-0540">Nuclease</keyword>
<keyword id="KW-1185">Reference proteome</keyword>
<sequence>MRLIREDSIEKHLVSEVRKIGGIAYKFVSPGRRGVPDRLVALPNGKIIFVECKAPGEKPTPYQLREHARLFALGHQVIVLDSQDLSSILPAVN</sequence>
<dbReference type="EC" id="3.1.-.-"/>
<dbReference type="EMBL" id="AF157835">
    <property type="protein sequence ID" value="AAF03987.1"/>
    <property type="molecule type" value="Genomic_DNA"/>
</dbReference>
<dbReference type="RefSeq" id="NP_051005.1">
    <property type="nucleotide sequence ID" value="NC_000935.1"/>
</dbReference>
<dbReference type="SMR" id="Q9T1Q4"/>
<dbReference type="KEGG" id="vg:1262338"/>
<dbReference type="Proteomes" id="UP000000853">
    <property type="component" value="Genome"/>
</dbReference>
<dbReference type="GO" id="GO:0046872">
    <property type="term" value="F:metal ion binding"/>
    <property type="evidence" value="ECO:0007669"/>
    <property type="project" value="UniProtKB-KW"/>
</dbReference>
<dbReference type="GO" id="GO:0004518">
    <property type="term" value="F:nuclease activity"/>
    <property type="evidence" value="ECO:0007669"/>
    <property type="project" value="UniProtKB-KW"/>
</dbReference>
<dbReference type="GO" id="GO:0003676">
    <property type="term" value="F:nucleic acid binding"/>
    <property type="evidence" value="ECO:0007669"/>
    <property type="project" value="InterPro"/>
</dbReference>
<dbReference type="Gene3D" id="3.40.1350.10">
    <property type="match status" value="1"/>
</dbReference>
<dbReference type="InterPro" id="IPR011856">
    <property type="entry name" value="tRNA_endonuc-like_dom_sf"/>
</dbReference>
<dbReference type="InterPro" id="IPR014883">
    <property type="entry name" value="VRR_NUC"/>
</dbReference>
<dbReference type="SMART" id="SM00990">
    <property type="entry name" value="VRR_NUC"/>
    <property type="match status" value="1"/>
</dbReference>
<organismHost>
    <name type="scientific">Escherichia coli</name>
    <dbReference type="NCBI Taxonomy" id="562"/>
</organismHost>
<reference key="1">
    <citation type="journal article" date="1999" name="Virology">
        <title>Isolation and characterization of APSE-1, a bacteriophage infecting the secondary endosymbiont of acyrthosiphon pisum.</title>
        <authorList>
            <person name="van der Wilk F."/>
            <person name="Dullemans A.M."/>
            <person name="Verbeek M."/>
            <person name="van den Heuvel J.F.J.M."/>
        </authorList>
    </citation>
    <scope>NUCLEOTIDE SEQUENCE [LARGE SCALE GENOMIC DNA]</scope>
</reference>
<organism>
    <name type="scientific">Acyrthosiphon pisum secondary endosymbiont phage 1</name>
    <name type="common">Bacteriophage APSE-1</name>
    <dbReference type="NCBI Taxonomy" id="2682836"/>
    <lineage>
        <taxon>Viruses</taxon>
        <taxon>Duplodnaviria</taxon>
        <taxon>Heunggongvirae</taxon>
        <taxon>Uroviricota</taxon>
        <taxon>Caudoviricetes</taxon>
        <taxon>Sendosyvirus</taxon>
        <taxon>Sendosyvirus APSE1</taxon>
    </lineage>
</organism>
<evidence type="ECO:0000250" key="1"/>
<comment type="function">
    <text evidence="1">Nuclease.</text>
</comment>
<comment type="cofactor">
    <cofactor evidence="1">
        <name>Mg(2+)</name>
        <dbReference type="ChEBI" id="CHEBI:18420"/>
    </cofactor>
    <text evidence="1">Divalent metal cations. Mg(2+) is the most probable.</text>
</comment>